<gene>
    <name evidence="1" type="primary">treF</name>
    <name type="ordered locus">EcE24377A_4007</name>
</gene>
<keyword id="KW-0963">Cytoplasm</keyword>
<keyword id="KW-0326">Glycosidase</keyword>
<keyword id="KW-0378">Hydrolase</keyword>
<keyword id="KW-1185">Reference proteome</keyword>
<evidence type="ECO:0000255" key="1">
    <source>
        <dbReference type="HAMAP-Rule" id="MF_01059"/>
    </source>
</evidence>
<organism>
    <name type="scientific">Escherichia coli O139:H28 (strain E24377A / ETEC)</name>
    <dbReference type="NCBI Taxonomy" id="331111"/>
    <lineage>
        <taxon>Bacteria</taxon>
        <taxon>Pseudomonadati</taxon>
        <taxon>Pseudomonadota</taxon>
        <taxon>Gammaproteobacteria</taxon>
        <taxon>Enterobacterales</taxon>
        <taxon>Enterobacteriaceae</taxon>
        <taxon>Escherichia</taxon>
    </lineage>
</organism>
<feature type="chain" id="PRO_1000064440" description="Cytoplasmic trehalase">
    <location>
        <begin position="1"/>
        <end position="549"/>
    </location>
</feature>
<feature type="active site" description="Proton donor/acceptor" evidence="1">
    <location>
        <position position="326"/>
    </location>
</feature>
<feature type="active site" description="Proton donor/acceptor" evidence="1">
    <location>
        <position position="509"/>
    </location>
</feature>
<feature type="binding site" evidence="1">
    <location>
        <position position="168"/>
    </location>
    <ligand>
        <name>substrate</name>
    </ligand>
</feature>
<feature type="binding site" evidence="1">
    <location>
        <begin position="175"/>
        <end position="176"/>
    </location>
    <ligand>
        <name>substrate</name>
    </ligand>
</feature>
<feature type="binding site" evidence="1">
    <location>
        <position position="212"/>
    </location>
    <ligand>
        <name>substrate</name>
    </ligand>
</feature>
<feature type="binding site" evidence="1">
    <location>
        <begin position="221"/>
        <end position="223"/>
    </location>
    <ligand>
        <name>substrate</name>
    </ligand>
</feature>
<feature type="binding site" evidence="1">
    <location>
        <begin position="292"/>
        <end position="294"/>
    </location>
    <ligand>
        <name>substrate</name>
    </ligand>
</feature>
<feature type="binding site" evidence="1">
    <location>
        <position position="324"/>
    </location>
    <ligand>
        <name>substrate</name>
    </ligand>
</feature>
<feature type="binding site" evidence="1">
    <location>
        <position position="525"/>
    </location>
    <ligand>
        <name>substrate</name>
    </ligand>
</feature>
<comment type="function">
    <text evidence="1">Hydrolyzes trehalose to glucose. Could be involved, in cells returning to low osmolarity conditions, in the utilization of the accumulated cytoplasmic trehalose, which was synthesized in response to high osmolarity.</text>
</comment>
<comment type="catalytic activity">
    <reaction evidence="1">
        <text>alpha,alpha-trehalose + H2O = alpha-D-glucose + beta-D-glucose</text>
        <dbReference type="Rhea" id="RHEA:32675"/>
        <dbReference type="ChEBI" id="CHEBI:15377"/>
        <dbReference type="ChEBI" id="CHEBI:15903"/>
        <dbReference type="ChEBI" id="CHEBI:16551"/>
        <dbReference type="ChEBI" id="CHEBI:17925"/>
        <dbReference type="EC" id="3.2.1.28"/>
    </reaction>
</comment>
<comment type="pathway">
    <text evidence="1">Glycan degradation; trehalose degradation; D-glucose from alpha,alpha-trehalose: step 1/1.</text>
</comment>
<comment type="subunit">
    <text evidence="1">Monomer.</text>
</comment>
<comment type="subcellular location">
    <subcellularLocation>
        <location evidence="1">Cytoplasm</location>
    </subcellularLocation>
</comment>
<comment type="similarity">
    <text evidence="1">Belongs to the glycosyl hydrolase 37 family.</text>
</comment>
<reference key="1">
    <citation type="journal article" date="2008" name="J. Bacteriol.">
        <title>The pangenome structure of Escherichia coli: comparative genomic analysis of E. coli commensal and pathogenic isolates.</title>
        <authorList>
            <person name="Rasko D.A."/>
            <person name="Rosovitz M.J."/>
            <person name="Myers G.S.A."/>
            <person name="Mongodin E.F."/>
            <person name="Fricke W.F."/>
            <person name="Gajer P."/>
            <person name="Crabtree J."/>
            <person name="Sebaihia M."/>
            <person name="Thomson N.R."/>
            <person name="Chaudhuri R."/>
            <person name="Henderson I.R."/>
            <person name="Sperandio V."/>
            <person name="Ravel J."/>
        </authorList>
    </citation>
    <scope>NUCLEOTIDE SEQUENCE [LARGE SCALE GENOMIC DNA]</scope>
    <source>
        <strain>E24377A / ETEC</strain>
    </source>
</reference>
<protein>
    <recommendedName>
        <fullName evidence="1">Cytoplasmic trehalase</fullName>
        <ecNumber evidence="1">3.2.1.28</ecNumber>
    </recommendedName>
    <alternativeName>
        <fullName evidence="1">Alpha,alpha-trehalase</fullName>
    </alternativeName>
    <alternativeName>
        <fullName evidence="1">Alpha,alpha-trehalose glucohydrolase</fullName>
    </alternativeName>
</protein>
<name>TREF_ECO24</name>
<dbReference type="EC" id="3.2.1.28" evidence="1"/>
<dbReference type="EMBL" id="CP000800">
    <property type="protein sequence ID" value="ABV16597.1"/>
    <property type="molecule type" value="Genomic_DNA"/>
</dbReference>
<dbReference type="RefSeq" id="WP_000934218.1">
    <property type="nucleotide sequence ID" value="NC_009801.1"/>
</dbReference>
<dbReference type="SMR" id="A7ZT60"/>
<dbReference type="CAZy" id="GH37">
    <property type="family name" value="Glycoside Hydrolase Family 37"/>
</dbReference>
<dbReference type="KEGG" id="ecw:EcE24377A_4007"/>
<dbReference type="HOGENOM" id="CLU_006451_3_1_6"/>
<dbReference type="UniPathway" id="UPA00300">
    <property type="reaction ID" value="UER00535"/>
</dbReference>
<dbReference type="Proteomes" id="UP000001122">
    <property type="component" value="Chromosome"/>
</dbReference>
<dbReference type="GO" id="GO:0005737">
    <property type="term" value="C:cytoplasm"/>
    <property type="evidence" value="ECO:0007669"/>
    <property type="project" value="UniProtKB-SubCell"/>
</dbReference>
<dbReference type="GO" id="GO:0004555">
    <property type="term" value="F:alpha,alpha-trehalase activity"/>
    <property type="evidence" value="ECO:0007669"/>
    <property type="project" value="UniProtKB-UniRule"/>
</dbReference>
<dbReference type="GO" id="GO:0071474">
    <property type="term" value="P:cellular hyperosmotic response"/>
    <property type="evidence" value="ECO:0007669"/>
    <property type="project" value="InterPro"/>
</dbReference>
<dbReference type="GO" id="GO:0005993">
    <property type="term" value="P:trehalose catabolic process"/>
    <property type="evidence" value="ECO:0007669"/>
    <property type="project" value="UniProtKB-UniRule"/>
</dbReference>
<dbReference type="FunFam" id="1.50.10.10:FF:000003">
    <property type="entry name" value="Cytoplasmic trehalase"/>
    <property type="match status" value="1"/>
</dbReference>
<dbReference type="Gene3D" id="1.50.10.10">
    <property type="match status" value="1"/>
</dbReference>
<dbReference type="HAMAP" id="MF_01059">
    <property type="entry name" value="Cyt_trehalase"/>
    <property type="match status" value="1"/>
</dbReference>
<dbReference type="InterPro" id="IPR008928">
    <property type="entry name" value="6-hairpin_glycosidase_sf"/>
</dbReference>
<dbReference type="InterPro" id="IPR012341">
    <property type="entry name" value="6hp_glycosidase-like_sf"/>
</dbReference>
<dbReference type="InterPro" id="IPR023715">
    <property type="entry name" value="Cyt_trehalase"/>
</dbReference>
<dbReference type="InterPro" id="IPR001661">
    <property type="entry name" value="Glyco_hydro_37"/>
</dbReference>
<dbReference type="InterPro" id="IPR018232">
    <property type="entry name" value="Glyco_hydro_37_CS"/>
</dbReference>
<dbReference type="NCBIfam" id="NF009773">
    <property type="entry name" value="PRK13270.1"/>
    <property type="match status" value="1"/>
</dbReference>
<dbReference type="NCBIfam" id="NF009774">
    <property type="entry name" value="PRK13271.1"/>
    <property type="match status" value="1"/>
</dbReference>
<dbReference type="PANTHER" id="PTHR23403:SF8">
    <property type="entry name" value="CYTOPLASMIC TREHALASE"/>
    <property type="match status" value="1"/>
</dbReference>
<dbReference type="PANTHER" id="PTHR23403">
    <property type="entry name" value="TREHALASE"/>
    <property type="match status" value="1"/>
</dbReference>
<dbReference type="Pfam" id="PF01204">
    <property type="entry name" value="Trehalase"/>
    <property type="match status" value="1"/>
</dbReference>
<dbReference type="PRINTS" id="PR00744">
    <property type="entry name" value="GLHYDRLASE37"/>
</dbReference>
<dbReference type="SUPFAM" id="SSF48208">
    <property type="entry name" value="Six-hairpin glycosidases"/>
    <property type="match status" value="1"/>
</dbReference>
<dbReference type="PROSITE" id="PS00927">
    <property type="entry name" value="TREHALASE_1"/>
    <property type="match status" value="1"/>
</dbReference>
<dbReference type="PROSITE" id="PS00928">
    <property type="entry name" value="TREHALASE_2"/>
    <property type="match status" value="1"/>
</dbReference>
<accession>A7ZT60</accession>
<sequence>MLNQKIQNPNPDELMIEVDLCYELDPYELKLDEMIEAEPEPEMIEGLPASDALTPADRYLELFEHVQSAKIFPDSKTFPDCAPKMDPLDILIRYRKVRRHRDFDLRKFVENHFWLPEVYSSEYVSDPQNSLKEHIDQLWPVLTREPQDHIPWSSLLALPQSYIVPGGRFSETYYWDSYFTMLGLAESGREDLLKCMADNFAWMIENYGHIPNGNRTYYLSRSQPPVFALMVELFEEDGVRGARRYLDHLKMEYAFWMDGAESLIPNQAYRHVVRMPDGSLLNRYWDDRDTPRDESWLEDVETAKHSGRPPNEVYRDLRAGAASGWDYSSRWLRDTGRLASIRTTQFIPIDLNAFLFKLESAIANISALKGEKETEALFRQKASARRDAVNRYLWDDENGIYRDYDWRREQLALFSAAAIVPLYVGMANHEQADRLANAVRSRLLTPGGILASEYETGEQWDKPNGWAPLQWMAIQGFKMYGDDLLGDEIARSWLKTVNQFYLEQHKMIEKYHIADGVPREGGGGEYPLQDGFGWTNGVVRRLIGLYGEP</sequence>
<proteinExistence type="inferred from homology"/>